<organism>
    <name type="scientific">Caenorhabditis elegans</name>
    <dbReference type="NCBI Taxonomy" id="6239"/>
    <lineage>
        <taxon>Eukaryota</taxon>
        <taxon>Metazoa</taxon>
        <taxon>Ecdysozoa</taxon>
        <taxon>Nematoda</taxon>
        <taxon>Chromadorea</taxon>
        <taxon>Rhabditida</taxon>
        <taxon>Rhabditina</taxon>
        <taxon>Rhabditomorpha</taxon>
        <taxon>Rhabditoidea</taxon>
        <taxon>Rhabditidae</taxon>
        <taxon>Peloderinae</taxon>
        <taxon>Caenorhabditis</taxon>
    </lineage>
</organism>
<comment type="function">
    <text evidence="4">Thought to form a complex that enhances transcription from repetitive DNA sequences by modulating chromatin structure.</text>
</comment>
<comment type="alternative products">
    <event type="alternative splicing"/>
    <isoform>
        <id>P54816-1</id>
        <name>a</name>
        <sequence type="displayed"/>
    </isoform>
    <isoform>
        <id>P54816-2</id>
        <name>b</name>
        <sequence type="described" ref="VSP_032725"/>
    </isoform>
    <isoform>
        <id>P54816-3</id>
        <name>c</name>
        <sequence type="described" ref="VSP_032726"/>
    </isoform>
</comment>
<comment type="similarity">
    <text evidence="5">Belongs to the AAA ATPase family.</text>
</comment>
<reference key="1">
    <citation type="journal article" date="2007" name="Mol. Genet. Genomics">
        <title>The bromodomain protein LEX-1 acts with TAM-1 to modulate gene expression in C. elegans.</title>
        <authorList>
            <person name="Tseng R.-J."/>
            <person name="Armstrong K.R."/>
            <person name="Wang X."/>
            <person name="Chamberlin H.M."/>
        </authorList>
    </citation>
    <scope>NUCLEOTIDE SEQUENCE [MRNA] (ISOFORM A)</scope>
    <scope>FUNCTION</scope>
    <scope>MUTAGENESIS OF ALA-548 AND GLY-1001</scope>
    <source>
        <strain>CM3</strain>
        <tissue>Embryo</tissue>
    </source>
</reference>
<reference key="2">
    <citation type="journal article" date="1998" name="Science">
        <title>Genome sequence of the nematode C. elegans: a platform for investigating biology.</title>
        <authorList>
            <consortium name="The C. elegans sequencing consortium"/>
        </authorList>
    </citation>
    <scope>NUCLEOTIDE SEQUENCE [LARGE SCALE GENOMIC DNA]</scope>
    <scope>ALTERNATIVE SPLICING</scope>
    <source>
        <strain>Bristol N2</strain>
    </source>
</reference>
<proteinExistence type="evidence at protein level"/>
<name>TBP7_CAEEL</name>
<evidence type="ECO:0000255" key="1"/>
<evidence type="ECO:0000255" key="2">
    <source>
        <dbReference type="PROSITE-ProRule" id="PRU00035"/>
    </source>
</evidence>
<evidence type="ECO:0000256" key="3">
    <source>
        <dbReference type="SAM" id="MobiDB-lite"/>
    </source>
</evidence>
<evidence type="ECO:0000269" key="4">
    <source>
    </source>
</evidence>
<evidence type="ECO:0000305" key="5"/>
<keyword id="KW-0025">Alternative splicing</keyword>
<keyword id="KW-0067">ATP-binding</keyword>
<keyword id="KW-0103">Bromodomain</keyword>
<keyword id="KW-0547">Nucleotide-binding</keyword>
<keyword id="KW-1185">Reference proteome</keyword>
<keyword id="KW-0804">Transcription</keyword>
<feature type="chain" id="PRO_0000084770" description="Tat-binding homolog 7">
    <location>
        <begin position="1"/>
        <end position="1291"/>
    </location>
</feature>
<feature type="domain" description="Bromo" evidence="2">
    <location>
        <begin position="914"/>
        <end position="1022"/>
    </location>
</feature>
<feature type="region of interest" description="Disordered" evidence="3">
    <location>
        <begin position="1"/>
        <end position="345"/>
    </location>
</feature>
<feature type="region of interest" description="Disordered" evidence="3">
    <location>
        <begin position="1110"/>
        <end position="1194"/>
    </location>
</feature>
<feature type="compositionally biased region" description="Basic and acidic residues" evidence="3">
    <location>
        <begin position="64"/>
        <end position="82"/>
    </location>
</feature>
<feature type="compositionally biased region" description="Polar residues" evidence="3">
    <location>
        <begin position="88"/>
        <end position="99"/>
    </location>
</feature>
<feature type="compositionally biased region" description="Acidic residues" evidence="3">
    <location>
        <begin position="226"/>
        <end position="257"/>
    </location>
</feature>
<feature type="compositionally biased region" description="Basic residues" evidence="3">
    <location>
        <begin position="298"/>
        <end position="311"/>
    </location>
</feature>
<feature type="compositionally biased region" description="Basic residues" evidence="3">
    <location>
        <begin position="1128"/>
        <end position="1142"/>
    </location>
</feature>
<feature type="compositionally biased region" description="Acidic residues" evidence="3">
    <location>
        <begin position="1148"/>
        <end position="1164"/>
    </location>
</feature>
<feature type="compositionally biased region" description="Basic and acidic residues" evidence="3">
    <location>
        <begin position="1168"/>
        <end position="1190"/>
    </location>
</feature>
<feature type="binding site" evidence="1">
    <location>
        <begin position="432"/>
        <end position="439"/>
    </location>
    <ligand>
        <name>ATP</name>
        <dbReference type="ChEBI" id="CHEBI:30616"/>
    </ligand>
</feature>
<feature type="splice variant" id="VSP_032725" description="In isoform b." evidence="5">
    <location>
        <begin position="160"/>
        <end position="161"/>
    </location>
</feature>
<feature type="splice variant" id="VSP_032726" description="In isoform c." evidence="5">
    <location>
        <begin position="880"/>
        <end position="928"/>
    </location>
</feature>
<feature type="mutagenesis site" description="In gu24; reduced lin-48 expression in hindgut cells." evidence="4">
    <original>A</original>
    <variation>V</variation>
    <location>
        <position position="548"/>
    </location>
</feature>
<feature type="mutagenesis site" description="In gu48; reduced lin-48 expression in hindgut cells." evidence="4">
    <original>G</original>
    <variation>E</variation>
    <location>
        <position position="1001"/>
    </location>
</feature>
<protein>
    <recommendedName>
        <fullName>Tat-binding homolog 7</fullName>
    </recommendedName>
    <alternativeName>
        <fullName>Lin-48 expression abnormal protein 1</fullName>
    </alternativeName>
</protein>
<sequence>MPRSDGFSPRKNLRRSARDHSRSYAGQCNEDFDDMYAPSSRRRSSGGVDGNGYTRSGRKINHNRYYEEEYHEAISSEEDERRYRTRRSSNSMTYRQQVMQAIDESKRNQKVPPAKRKRIYLSDEEEEDFAEAAHVENTVPERATRRSTRRRSSMHEELGVSEQEESPVRRTRKAAKRLGSEQPEENLAADDPLPMEGGGEIVLPIAEIDGMAEQENEDLIEKIGREEEEEGAEEDEQSGEKDPEEEEDDSSNAESSEESTAPRQYSLRRRQPVVQFNASEARENRRARLEHHRVANQNRHHRNRNGSRRRRSDSDSDSDDMVLPRPDKRQSRPHMHNRGERERGRFMPINMTEKELQSAQHILMDRMRKTDAGQGASDIDPMSVDSSVGFDQVGGLGHHIQSLKEVVLFPMLYPEVFEKFRINPPKGVVFYGPPGTGKTLVARALANECRRGANKVAFFMRKGADCLSKWVGESERQLRLLFDQAYAMRPSIIFFDEIDGLAPVRSSKQDQIHASIVSTLLALMDGLDGRGEVVVIGATNRLDTLDPALRRPGRFDRELRFSLPDLNARRQILDIHTSKWEENKPIPETLDAIAERTSGYCGADLKFLCTEAVLIGLRSRYPHIYMCSERLKLDVATIKITSEHFGHAMRRITPASRRDLTIPSRPLDERTSILLGDTVSNLISLRIPQGYRCVENAMATASSELEQVVRALEPNPTVPAIRLLLCGSEQLADGGQTSYVLPAILAKLDHLPVFSLSVSSLLTDGRPEEAFSNAIQSAMRASATGPCIMLLPSIDEWIKVIPVSVQHMLITCLESMTGFTPILFLSTLDTSFEDAPEYVTEIFRHANCITLNPSRRTIRQKYFEHVIEKINTPPKVFDPTVYEMPLPDDDSPDSKPSRKLNDDETRELLKMYTALQRQMRLFFKERLTRLMRDRRFVEFVEPVDPDEAEDYYEIIETPICMQDIMEKLNNCEYNHADKFVADLILIQTNALEYNPSTTKDGKLIRQMANTLRDAIDDLIECELDESFVERIETVSRMLQDAGVTPTSDKLLTEIPKGFARKKAWSMTNSLAKEIEQWTSEREAENQKMLSKLGVAAPTLELVVVPVEDMKSEEGTSTSTDGVPASAGNKKKLLKKKKGQKKSKTGESEEHDEDSTVEDAGEDTIVENLEIKKNQETPNSEHDIEMKDASKDSTPSVQISIAEKELIVSKPATCELIQCCVEKSEGWSVSELERLSSVLSHTIERFRDEWNRENLPAQLTQIVREWQTADDSNNTIVNGTLNKSNGNLANGH</sequence>
<gene>
    <name type="primary">lex-1</name>
    <name type="ORF">F11A10.1</name>
</gene>
<accession>P54816</accession>
<accession>A7LPG7</accession>
<accession>A7LPG8</accession>
<accession>Q21337</accession>
<accession>Q3YFF5</accession>
<dbReference type="EMBL" id="DQ140399">
    <property type="protein sequence ID" value="AAZ73761.1"/>
    <property type="molecule type" value="mRNA"/>
</dbReference>
<dbReference type="EMBL" id="Z68297">
    <property type="protein sequence ID" value="CAA92596.2"/>
    <property type="molecule type" value="Genomic_DNA"/>
</dbReference>
<dbReference type="EMBL" id="Z68316">
    <property type="protein sequence ID" value="CAA92596.2"/>
    <property type="status" value="JOINED"/>
    <property type="molecule type" value="Genomic_DNA"/>
</dbReference>
<dbReference type="EMBL" id="Z68297">
    <property type="protein sequence ID" value="CAO82028.1"/>
    <property type="molecule type" value="Genomic_DNA"/>
</dbReference>
<dbReference type="EMBL" id="Z68316">
    <property type="protein sequence ID" value="CAO82028.1"/>
    <property type="status" value="JOINED"/>
    <property type="molecule type" value="Genomic_DNA"/>
</dbReference>
<dbReference type="EMBL" id="Z68297">
    <property type="protein sequence ID" value="CAO82029.1"/>
    <property type="molecule type" value="Genomic_DNA"/>
</dbReference>
<dbReference type="EMBL" id="Z68316">
    <property type="protein sequence ID" value="CAO82029.1"/>
    <property type="status" value="JOINED"/>
    <property type="molecule type" value="Genomic_DNA"/>
</dbReference>
<dbReference type="PIR" id="T20739">
    <property type="entry name" value="T20739"/>
</dbReference>
<dbReference type="RefSeq" id="NP_001122768.1">
    <molecule id="P54816-2"/>
    <property type="nucleotide sequence ID" value="NM_001129296.4"/>
</dbReference>
<dbReference type="RefSeq" id="NP_502289.2">
    <molecule id="P54816-1"/>
    <property type="nucleotide sequence ID" value="NM_069888.9"/>
</dbReference>
<dbReference type="SMR" id="P54816"/>
<dbReference type="BioGRID" id="43240">
    <property type="interactions" value="7"/>
</dbReference>
<dbReference type="FunCoup" id="P54816">
    <property type="interactions" value="2725"/>
</dbReference>
<dbReference type="STRING" id="6239.F11A10.1a.2"/>
<dbReference type="iPTMnet" id="P54816"/>
<dbReference type="PaxDb" id="6239-F11A10.1a"/>
<dbReference type="PeptideAtlas" id="P54816"/>
<dbReference type="EnsemblMetazoa" id="F11A10.1a.1">
    <molecule id="P54816-1"/>
    <property type="protein sequence ID" value="F11A10.1a.1"/>
    <property type="gene ID" value="WBGene00008682"/>
</dbReference>
<dbReference type="EnsemblMetazoa" id="F11A10.1b.1">
    <molecule id="P54816-2"/>
    <property type="protein sequence ID" value="F11A10.1b.1"/>
    <property type="gene ID" value="WBGene00008682"/>
</dbReference>
<dbReference type="GeneID" id="178146"/>
<dbReference type="KEGG" id="cel:CELE_F11A10.1"/>
<dbReference type="UCSC" id="F11A10.1a">
    <molecule id="P54816-1"/>
    <property type="organism name" value="c. elegans"/>
</dbReference>
<dbReference type="AGR" id="WB:WBGene00008682"/>
<dbReference type="CTD" id="178146"/>
<dbReference type="WormBase" id="F11A10.1a">
    <molecule id="P54816-1"/>
    <property type="protein sequence ID" value="CE40608"/>
    <property type="gene ID" value="WBGene00008682"/>
    <property type="gene designation" value="lex-1"/>
</dbReference>
<dbReference type="WormBase" id="F11A10.1b">
    <molecule id="P54816-2"/>
    <property type="protein sequence ID" value="CE41384"/>
    <property type="gene ID" value="WBGene00008682"/>
    <property type="gene designation" value="lex-1"/>
</dbReference>
<dbReference type="eggNOG" id="KOG0732">
    <property type="taxonomic scope" value="Eukaryota"/>
</dbReference>
<dbReference type="GeneTree" id="ENSGT00550000074694"/>
<dbReference type="InParanoid" id="P54816"/>
<dbReference type="OMA" id="YNPAIRK"/>
<dbReference type="OrthoDB" id="5421at2759"/>
<dbReference type="PhylomeDB" id="P54816"/>
<dbReference type="PRO" id="PR:P54816"/>
<dbReference type="Proteomes" id="UP000001940">
    <property type="component" value="Chromosome IV"/>
</dbReference>
<dbReference type="Bgee" id="WBGene00008682">
    <property type="expression patterns" value="Expressed in embryo and 4 other cell types or tissues"/>
</dbReference>
<dbReference type="GO" id="GO:0005634">
    <property type="term" value="C:nucleus"/>
    <property type="evidence" value="ECO:0000318"/>
    <property type="project" value="GO_Central"/>
</dbReference>
<dbReference type="GO" id="GO:0005524">
    <property type="term" value="F:ATP binding"/>
    <property type="evidence" value="ECO:0007669"/>
    <property type="project" value="UniProtKB-KW"/>
</dbReference>
<dbReference type="GO" id="GO:0016887">
    <property type="term" value="F:ATP hydrolysis activity"/>
    <property type="evidence" value="ECO:0000318"/>
    <property type="project" value="GO_Central"/>
</dbReference>
<dbReference type="GO" id="GO:0003682">
    <property type="term" value="F:chromatin binding"/>
    <property type="evidence" value="ECO:0000318"/>
    <property type="project" value="GO_Central"/>
</dbReference>
<dbReference type="GO" id="GO:0042393">
    <property type="term" value="F:histone binding"/>
    <property type="evidence" value="ECO:0000318"/>
    <property type="project" value="GO_Central"/>
</dbReference>
<dbReference type="GO" id="GO:0006334">
    <property type="term" value="P:nucleosome assembly"/>
    <property type="evidence" value="ECO:0000318"/>
    <property type="project" value="GO_Central"/>
</dbReference>
<dbReference type="GO" id="GO:0006337">
    <property type="term" value="P:nucleosome disassembly"/>
    <property type="evidence" value="ECO:0000318"/>
    <property type="project" value="GO_Central"/>
</dbReference>
<dbReference type="GO" id="GO:0031445">
    <property type="term" value="P:regulation of heterochromatin formation"/>
    <property type="evidence" value="ECO:0000315"/>
    <property type="project" value="UniProtKB"/>
</dbReference>
<dbReference type="GO" id="GO:0045815">
    <property type="term" value="P:transcription initiation-coupled chromatin remodeling"/>
    <property type="evidence" value="ECO:0000318"/>
    <property type="project" value="GO_Central"/>
</dbReference>
<dbReference type="CDD" id="cd05528">
    <property type="entry name" value="Bromo_AAA"/>
    <property type="match status" value="1"/>
</dbReference>
<dbReference type="CDD" id="cd19517">
    <property type="entry name" value="RecA-like_Yta7-like"/>
    <property type="match status" value="1"/>
</dbReference>
<dbReference type="FunFam" id="1.10.8.60:FF:000016">
    <property type="entry name" value="ATPase family AAA domain-containing protein 2B"/>
    <property type="match status" value="1"/>
</dbReference>
<dbReference type="FunFam" id="3.40.50.300:FF:000061">
    <property type="entry name" value="ATPase family, AAA domain-containing 2"/>
    <property type="match status" value="1"/>
</dbReference>
<dbReference type="Gene3D" id="1.10.8.60">
    <property type="match status" value="1"/>
</dbReference>
<dbReference type="Gene3D" id="1.20.920.10">
    <property type="entry name" value="Bromodomain-like"/>
    <property type="match status" value="1"/>
</dbReference>
<dbReference type="Gene3D" id="3.40.50.300">
    <property type="entry name" value="P-loop containing nucleotide triphosphate hydrolases"/>
    <property type="match status" value="1"/>
</dbReference>
<dbReference type="InterPro" id="IPR003593">
    <property type="entry name" value="AAA+_ATPase"/>
</dbReference>
<dbReference type="InterPro" id="IPR041569">
    <property type="entry name" value="AAA_lid_3"/>
</dbReference>
<dbReference type="InterPro" id="IPR045199">
    <property type="entry name" value="ATAD2-like"/>
</dbReference>
<dbReference type="InterPro" id="IPR003959">
    <property type="entry name" value="ATPase_AAA_core"/>
</dbReference>
<dbReference type="InterPro" id="IPR003960">
    <property type="entry name" value="ATPase_AAA_CS"/>
</dbReference>
<dbReference type="InterPro" id="IPR001487">
    <property type="entry name" value="Bromodomain"/>
</dbReference>
<dbReference type="InterPro" id="IPR036427">
    <property type="entry name" value="Bromodomain-like_sf"/>
</dbReference>
<dbReference type="InterPro" id="IPR018359">
    <property type="entry name" value="Bromodomain_CS"/>
</dbReference>
<dbReference type="InterPro" id="IPR027417">
    <property type="entry name" value="P-loop_NTPase"/>
</dbReference>
<dbReference type="PANTHER" id="PTHR23069">
    <property type="entry name" value="AAA DOMAIN-CONTAINING"/>
    <property type="match status" value="1"/>
</dbReference>
<dbReference type="PANTHER" id="PTHR23069:SF0">
    <property type="entry name" value="TAT-BINDING HOMOLOG 7"/>
    <property type="match status" value="1"/>
</dbReference>
<dbReference type="Pfam" id="PF00004">
    <property type="entry name" value="AAA"/>
    <property type="match status" value="1"/>
</dbReference>
<dbReference type="Pfam" id="PF17862">
    <property type="entry name" value="AAA_lid_3"/>
    <property type="match status" value="1"/>
</dbReference>
<dbReference type="Pfam" id="PF00439">
    <property type="entry name" value="Bromodomain"/>
    <property type="match status" value="1"/>
</dbReference>
<dbReference type="PRINTS" id="PR00503">
    <property type="entry name" value="BROMODOMAIN"/>
</dbReference>
<dbReference type="SMART" id="SM00382">
    <property type="entry name" value="AAA"/>
    <property type="match status" value="1"/>
</dbReference>
<dbReference type="SMART" id="SM00297">
    <property type="entry name" value="BROMO"/>
    <property type="match status" value="1"/>
</dbReference>
<dbReference type="SUPFAM" id="SSF47370">
    <property type="entry name" value="Bromodomain"/>
    <property type="match status" value="1"/>
</dbReference>
<dbReference type="SUPFAM" id="SSF52540">
    <property type="entry name" value="P-loop containing nucleoside triphosphate hydrolases"/>
    <property type="match status" value="2"/>
</dbReference>
<dbReference type="PROSITE" id="PS00674">
    <property type="entry name" value="AAA"/>
    <property type="match status" value="1"/>
</dbReference>
<dbReference type="PROSITE" id="PS00633">
    <property type="entry name" value="BROMODOMAIN_1"/>
    <property type="match status" value="1"/>
</dbReference>
<dbReference type="PROSITE" id="PS50014">
    <property type="entry name" value="BROMODOMAIN_2"/>
    <property type="match status" value="1"/>
</dbReference>